<evidence type="ECO:0000250" key="1">
    <source>
        <dbReference type="UniProtKB" id="P58710"/>
    </source>
</evidence>
<evidence type="ECO:0000255" key="2"/>
<evidence type="ECO:0000255" key="3">
    <source>
        <dbReference type="PROSITE-ProRule" id="PRU00718"/>
    </source>
</evidence>
<evidence type="ECO:0000269" key="4">
    <source>
    </source>
</evidence>
<evidence type="ECO:0000303" key="5">
    <source>
    </source>
</evidence>
<evidence type="ECO:0000305" key="6"/>
<evidence type="ECO:0000312" key="7">
    <source>
        <dbReference type="Araport" id="AT2G46740"/>
    </source>
</evidence>
<evidence type="ECO:0000312" key="8">
    <source>
        <dbReference type="EMBL" id="AEC10747.1"/>
    </source>
</evidence>
<evidence type="ECO:0000312" key="9">
    <source>
        <dbReference type="Proteomes" id="UP000006548"/>
    </source>
</evidence>
<accession>O81030</accession>
<name>GGLO5_ARATH</name>
<dbReference type="EC" id="1.1.3.8" evidence="4"/>
<dbReference type="EMBL" id="AC005310">
    <property type="protein sequence ID" value="AAC33493.1"/>
    <property type="molecule type" value="Genomic_DNA"/>
</dbReference>
<dbReference type="EMBL" id="CP002685">
    <property type="protein sequence ID" value="AEC10747.1"/>
    <property type="molecule type" value="Genomic_DNA"/>
</dbReference>
<dbReference type="PIR" id="T02675">
    <property type="entry name" value="T02675"/>
</dbReference>
<dbReference type="RefSeq" id="NP_182197.1">
    <property type="nucleotide sequence ID" value="NM_130240.3"/>
</dbReference>
<dbReference type="SMR" id="O81030"/>
<dbReference type="FunCoup" id="O81030">
    <property type="interactions" value="494"/>
</dbReference>
<dbReference type="STRING" id="3702.O81030"/>
<dbReference type="PaxDb" id="3702-AT2G46740.1"/>
<dbReference type="ProteomicsDB" id="224781"/>
<dbReference type="EnsemblPlants" id="AT2G46740.1">
    <property type="protein sequence ID" value="AT2G46740.1"/>
    <property type="gene ID" value="AT2G46740"/>
</dbReference>
<dbReference type="GeneID" id="819287"/>
<dbReference type="Gramene" id="AT2G46740.1">
    <property type="protein sequence ID" value="AT2G46740.1"/>
    <property type="gene ID" value="AT2G46740"/>
</dbReference>
<dbReference type="KEGG" id="ath:AT2G46740"/>
<dbReference type="Araport" id="AT2G46740"/>
<dbReference type="TAIR" id="AT2G46740">
    <property type="gene designation" value="GULLO5"/>
</dbReference>
<dbReference type="eggNOG" id="KOG4730">
    <property type="taxonomic scope" value="Eukaryota"/>
</dbReference>
<dbReference type="HOGENOM" id="CLU_019762_2_0_1"/>
<dbReference type="InParanoid" id="O81030"/>
<dbReference type="OMA" id="KYVMRND"/>
<dbReference type="OrthoDB" id="610608at2759"/>
<dbReference type="PhylomeDB" id="O81030"/>
<dbReference type="BioCyc" id="ARA:AT2G46740-MONOMER"/>
<dbReference type="BioCyc" id="MetaCyc:GQT-4288-MONOMER"/>
<dbReference type="BRENDA" id="1.1.3.37">
    <property type="organism ID" value="399"/>
</dbReference>
<dbReference type="BRENDA" id="1.1.3.8">
    <property type="organism ID" value="399"/>
</dbReference>
<dbReference type="UniPathway" id="UPA00132"/>
<dbReference type="PRO" id="PR:O81030"/>
<dbReference type="Proteomes" id="UP000006548">
    <property type="component" value="Chromosome 2"/>
</dbReference>
<dbReference type="ExpressionAtlas" id="O81030">
    <property type="expression patterns" value="baseline and differential"/>
</dbReference>
<dbReference type="GO" id="GO:0016020">
    <property type="term" value="C:membrane"/>
    <property type="evidence" value="ECO:0007669"/>
    <property type="project" value="InterPro"/>
</dbReference>
<dbReference type="GO" id="GO:0003885">
    <property type="term" value="F:D-arabinono-1,4-lactone oxidase activity"/>
    <property type="evidence" value="ECO:0007669"/>
    <property type="project" value="InterPro"/>
</dbReference>
<dbReference type="GO" id="GO:0071949">
    <property type="term" value="F:FAD binding"/>
    <property type="evidence" value="ECO:0007669"/>
    <property type="project" value="InterPro"/>
</dbReference>
<dbReference type="GO" id="GO:0050105">
    <property type="term" value="F:L-gulonolactone oxidase activity"/>
    <property type="evidence" value="ECO:0000315"/>
    <property type="project" value="TAIR"/>
</dbReference>
<dbReference type="GO" id="GO:0019853">
    <property type="term" value="P:L-ascorbic acid biosynthetic process"/>
    <property type="evidence" value="ECO:0000315"/>
    <property type="project" value="TAIR"/>
</dbReference>
<dbReference type="FunFam" id="3.30.70.2520:FF:000003">
    <property type="entry name" value="L-gulonolactone oxidase 2"/>
    <property type="match status" value="1"/>
</dbReference>
<dbReference type="FunFam" id="3.30.465.10:FF:000033">
    <property type="entry name" value="L-gulonolactone oxidase 5"/>
    <property type="match status" value="1"/>
</dbReference>
<dbReference type="Gene3D" id="3.30.465.10">
    <property type="match status" value="1"/>
</dbReference>
<dbReference type="Gene3D" id="3.30.70.2520">
    <property type="match status" value="1"/>
</dbReference>
<dbReference type="Gene3D" id="3.30.43.10">
    <property type="entry name" value="Uridine Diphospho-n-acetylenolpyruvylglucosamine Reductase, domain 2"/>
    <property type="match status" value="1"/>
</dbReference>
<dbReference type="InterPro" id="IPR007173">
    <property type="entry name" value="ALO_C"/>
</dbReference>
<dbReference type="InterPro" id="IPR016166">
    <property type="entry name" value="FAD-bd_PCMH"/>
</dbReference>
<dbReference type="InterPro" id="IPR036318">
    <property type="entry name" value="FAD-bd_PCMH-like_sf"/>
</dbReference>
<dbReference type="InterPro" id="IPR016167">
    <property type="entry name" value="FAD-bd_PCMH_sub1"/>
</dbReference>
<dbReference type="InterPro" id="IPR016169">
    <property type="entry name" value="FAD-bd_PCMH_sub2"/>
</dbReference>
<dbReference type="InterPro" id="IPR050432">
    <property type="entry name" value="FAD-linked_Oxidoreductases_BP"/>
</dbReference>
<dbReference type="InterPro" id="IPR055154">
    <property type="entry name" value="GULLO2-like_C"/>
</dbReference>
<dbReference type="InterPro" id="IPR010030">
    <property type="entry name" value="GULO_Plant"/>
</dbReference>
<dbReference type="InterPro" id="IPR006094">
    <property type="entry name" value="Oxid_FAD_bind_N"/>
</dbReference>
<dbReference type="NCBIfam" id="TIGR01677">
    <property type="entry name" value="pln_FAD_oxido"/>
    <property type="match status" value="1"/>
</dbReference>
<dbReference type="PANTHER" id="PTHR13878">
    <property type="entry name" value="GULONOLACTONE OXIDASE"/>
    <property type="match status" value="1"/>
</dbReference>
<dbReference type="PANTHER" id="PTHR13878:SF67">
    <property type="entry name" value="L-GULONOLACTONE OXIDASE 5"/>
    <property type="match status" value="1"/>
</dbReference>
<dbReference type="Pfam" id="PF04030">
    <property type="entry name" value="ALO"/>
    <property type="match status" value="1"/>
</dbReference>
<dbReference type="Pfam" id="PF01565">
    <property type="entry name" value="FAD_binding_4"/>
    <property type="match status" value="1"/>
</dbReference>
<dbReference type="Pfam" id="PF22906">
    <property type="entry name" value="GULLO2-like_3rd"/>
    <property type="match status" value="1"/>
</dbReference>
<dbReference type="SUPFAM" id="SSF56176">
    <property type="entry name" value="FAD-binding/transporter-associated domain-like"/>
    <property type="match status" value="1"/>
</dbReference>
<dbReference type="PROSITE" id="PS51387">
    <property type="entry name" value="FAD_PCMH"/>
    <property type="match status" value="1"/>
</dbReference>
<protein>
    <recommendedName>
        <fullName evidence="5">L-gulonolactone oxidase 5</fullName>
        <shortName evidence="5">AtGulLO5</shortName>
        <ecNumber evidence="4">1.1.3.8</ecNumber>
    </recommendedName>
</protein>
<keyword id="KW-0060">Ascorbate biosynthesis</keyword>
<keyword id="KW-0274">FAD</keyword>
<keyword id="KW-0285">Flavoprotein</keyword>
<keyword id="KW-0560">Oxidoreductase</keyword>
<keyword id="KW-1185">Reference proteome</keyword>
<keyword id="KW-0732">Signal</keyword>
<sequence>MAFGYSPSYCSFWRTLLGLYCLFTLVHTVISTPPEDPVKCVSGNTNCIVTNSLGAFPDRSTCRAANVAYPTTEAELVSIVAAATKAGRKMRVTTRYSHSIPKLTCTDGNDGLFISTKFLNHTVQADAKAMTLTVESGVTLRQLIAEAAKVGLALPYAPYWWGVTVGGMMGTGAHGSSLWGKGSAVHDYVTEIRMVSPGSVNDGFAKIRVLSETTTPNEFNAAKVSLGVLGVISQVTFELQPMFKRSLKYVMRNDLDFNDEALTFGKKHEFADFVWLPSQGKVVYRMDDRVAVNTLGNGLYDFFPFRSQLSAVLATTRSSEETQETLRDAHGKCVTATTISSTLFSTSYGLTNNGITFTGYPVIGSQNRMMSSGSCLDGLEDKLTSACAWDSRVKGVFYHQTTFSIPLTQVKSFINDIKSLLKIDSKSLCGLELYYGILMRYVTSSPAYLGKETEAIDFDITYYRANDPLTPRLYEDFIEEIEQIALLKYNALPHWGKNRNLAFDGVIKKYKNAPAFLKVKESYDPNGLFSSEWTDQILGIKGNPTIVKDGCALEGLCICSDDAHCAPSKGYLCRPGKVYKEARVCTHVPK</sequence>
<reference key="1">
    <citation type="journal article" date="1999" name="Nature">
        <title>Sequence and analysis of chromosome 2 of the plant Arabidopsis thaliana.</title>
        <authorList>
            <person name="Lin X."/>
            <person name="Kaul S."/>
            <person name="Rounsley S.D."/>
            <person name="Shea T.P."/>
            <person name="Benito M.-I."/>
            <person name="Town C.D."/>
            <person name="Fujii C.Y."/>
            <person name="Mason T.M."/>
            <person name="Bowman C.L."/>
            <person name="Barnstead M.E."/>
            <person name="Feldblyum T.V."/>
            <person name="Buell C.R."/>
            <person name="Ketchum K.A."/>
            <person name="Lee J.J."/>
            <person name="Ronning C.M."/>
            <person name="Koo H.L."/>
            <person name="Moffat K.S."/>
            <person name="Cronin L.A."/>
            <person name="Shen M."/>
            <person name="Pai G."/>
            <person name="Van Aken S."/>
            <person name="Umayam L."/>
            <person name="Tallon L.J."/>
            <person name="Gill J.E."/>
            <person name="Adams M.D."/>
            <person name="Carrera A.J."/>
            <person name="Creasy T.H."/>
            <person name="Goodman H.M."/>
            <person name="Somerville C.R."/>
            <person name="Copenhaver G.P."/>
            <person name="Preuss D."/>
            <person name="Nierman W.C."/>
            <person name="White O."/>
            <person name="Eisen J.A."/>
            <person name="Salzberg S.L."/>
            <person name="Fraser C.M."/>
            <person name="Venter J.C."/>
        </authorList>
    </citation>
    <scope>NUCLEOTIDE SEQUENCE [LARGE SCALE GENOMIC DNA]</scope>
    <source>
        <strain>cv. Columbia</strain>
    </source>
</reference>
<reference key="2">
    <citation type="journal article" date="2017" name="Plant J.">
        <title>Araport11: a complete reannotation of the Arabidopsis thaliana reference genome.</title>
        <authorList>
            <person name="Cheng C.Y."/>
            <person name="Krishnakumar V."/>
            <person name="Chan A.P."/>
            <person name="Thibaud-Nissen F."/>
            <person name="Schobel S."/>
            <person name="Town C.D."/>
        </authorList>
    </citation>
    <scope>GENOME REANNOTATION</scope>
    <source>
        <strain>cv. Columbia</strain>
    </source>
</reference>
<reference key="3">
    <citation type="journal article" date="2010" name="Biosci. Biotechnol. Biochem.">
        <title>The contribution of Arabidopsis homologs of L-gulono-1,4-lactone oxidase to the biosynthesis of ascorbic acid.</title>
        <authorList>
            <person name="Maruta T."/>
            <person name="Ichikawa Y."/>
            <person name="Mieda T."/>
            <person name="Takeda T."/>
            <person name="Tamoi M."/>
            <person name="Yabuta Y."/>
            <person name="Ishikawa T."/>
            <person name="Shigeoka S."/>
        </authorList>
    </citation>
    <scope>FUNCTION</scope>
    <scope>CATALYTIC ACTIVITY</scope>
</reference>
<comment type="function">
    <text evidence="1 4">Catalyzes the oxidation of L-gulono-1,4-lactone to ascorbic acid (PubMed:20622436). L-gulono-1,4-lactone is oxidized to hydrogen peroxide and L-xylo-hexulonolactone which spontaneously isomerizes to L-ascorbate (By similarity).</text>
</comment>
<comment type="catalytic activity">
    <reaction evidence="4">
        <text>L-gulono-1,4-lactone + O2 = L-ascorbate + H2O2 + H(+)</text>
        <dbReference type="Rhea" id="RHEA:32363"/>
        <dbReference type="ChEBI" id="CHEBI:15378"/>
        <dbReference type="ChEBI" id="CHEBI:15379"/>
        <dbReference type="ChEBI" id="CHEBI:16240"/>
        <dbReference type="ChEBI" id="CHEBI:17587"/>
        <dbReference type="ChEBI" id="CHEBI:38290"/>
        <dbReference type="EC" id="1.1.3.8"/>
    </reaction>
</comment>
<comment type="cofactor">
    <cofactor evidence="1">
        <name>FAD</name>
        <dbReference type="ChEBI" id="CHEBI:57692"/>
    </cofactor>
</comment>
<comment type="pathway">
    <text evidence="4">Cofactor biosynthesis; L-ascorbate biosynthesis.</text>
</comment>
<comment type="similarity">
    <text evidence="6">Belongs to the oxygen-dependent FAD-linked oxidoreductase family.</text>
</comment>
<organism evidence="9">
    <name type="scientific">Arabidopsis thaliana</name>
    <name type="common">Mouse-ear cress</name>
    <dbReference type="NCBI Taxonomy" id="3702"/>
    <lineage>
        <taxon>Eukaryota</taxon>
        <taxon>Viridiplantae</taxon>
        <taxon>Streptophyta</taxon>
        <taxon>Embryophyta</taxon>
        <taxon>Tracheophyta</taxon>
        <taxon>Spermatophyta</taxon>
        <taxon>Magnoliopsida</taxon>
        <taxon>eudicotyledons</taxon>
        <taxon>Gunneridae</taxon>
        <taxon>Pentapetalae</taxon>
        <taxon>rosids</taxon>
        <taxon>malvids</taxon>
        <taxon>Brassicales</taxon>
        <taxon>Brassicaceae</taxon>
        <taxon>Camelineae</taxon>
        <taxon>Arabidopsis</taxon>
    </lineage>
</organism>
<proteinExistence type="evidence at protein level"/>
<gene>
    <name evidence="5" type="primary">GULLO5</name>
    <name evidence="7" type="ordered locus">At2g46740</name>
    <name evidence="8" type="ORF">F19D11.2</name>
</gene>
<feature type="signal peptide" evidence="2">
    <location>
        <begin position="1"/>
        <end position="31"/>
    </location>
</feature>
<feature type="chain" id="PRO_0000432506" description="L-gulonolactone oxidase 5" evidence="2">
    <location>
        <begin position="32"/>
        <end position="590"/>
    </location>
</feature>
<feature type="domain" description="FAD-binding PCMH-type" evidence="3">
    <location>
        <begin position="60"/>
        <end position="242"/>
    </location>
</feature>